<evidence type="ECO:0000255" key="1"/>
<evidence type="ECO:0000256" key="2">
    <source>
        <dbReference type="SAM" id="MobiDB-lite"/>
    </source>
</evidence>
<evidence type="ECO:0000312" key="3">
    <source>
        <dbReference type="EMBL" id="EDX16497.1"/>
    </source>
</evidence>
<gene>
    <name type="ORF">GD24576</name>
</gene>
<proteinExistence type="inferred from homology"/>
<feature type="chain" id="PRO_0000378605" description="DM7 family protein GD24576">
    <location>
        <begin position="1"/>
        <end position="540"/>
    </location>
</feature>
<feature type="region of interest" description="Disordered" evidence="2">
    <location>
        <begin position="416"/>
        <end position="443"/>
    </location>
</feature>
<feature type="compositionally biased region" description="Basic and acidic residues" evidence="2">
    <location>
        <begin position="417"/>
        <end position="443"/>
    </location>
</feature>
<dbReference type="EMBL" id="CH983659">
    <property type="protein sequence ID" value="EDX16497.1"/>
    <property type="molecule type" value="Genomic_DNA"/>
</dbReference>
<dbReference type="HOGENOM" id="CLU_477581_0_0_1"/>
<dbReference type="OMA" id="KICREEP"/>
<dbReference type="OrthoDB" id="7867651at2759"/>
<dbReference type="PhylomeDB" id="B4NU50"/>
<dbReference type="Proteomes" id="UP000000304">
    <property type="component" value="Unassembled WGS sequence"/>
</dbReference>
<dbReference type="InterPro" id="IPR006610">
    <property type="entry name" value="DM7"/>
</dbReference>
<dbReference type="SMART" id="SM00688">
    <property type="entry name" value="DM7"/>
    <property type="match status" value="2"/>
</dbReference>
<sequence>MLRMDTVHRDKDQVVILKKTNYLPYLVNLFIPKLFYPEKIVVARLYLNVNKHDKHAAENFKGTETPCFDVPPSLFSDKVPMDKIVFLPTVMLPMGFEAGGVFGPGVLTRRSYPIDLKAAGHKGQTPPLFIGLLMDIQAPTKVESLLKEVGESQPAQDILMNWVRASNNLINGEQPKEQELRDEFSLSMVFNLPTPPSPPSPYPYGRIPLQFNIYTPDLSNVLLLMSHQRDLTVAILSTINNPHVPSVAFAAMGDEEECPKFELPLSAFPTFEGVNRPIFLPKRFMPKGFEAGCVLKPGALSDLWFMDHIGRFGPTQPQHNGSITPPLFVGKICREEPTVDMIRKIQLEIEKKASEDATLPAVKPKIDISITKGFMVMETAAEDPKPPKGAYSVQSYEEAFDDGCVVKVAKRVATEATDTRGRDEIRTSCDQSQEKDEGSAEADKKHLSCFHVDSDIDNIAMAMARMGVADMSLPAEGEAMPGIDGDRALIQLSHVMEDRNQIRTHTDQLMQDHIFRMNSNRMLALRQPFTCIGCGAQENK</sequence>
<accession>B4NU50</accession>
<comment type="similarity">
    <text evidence="1">Belongs to the DM7 family.</text>
</comment>
<organism>
    <name type="scientific">Drosophila simulans</name>
    <name type="common">Fruit fly</name>
    <dbReference type="NCBI Taxonomy" id="7240"/>
    <lineage>
        <taxon>Eukaryota</taxon>
        <taxon>Metazoa</taxon>
        <taxon>Ecdysozoa</taxon>
        <taxon>Arthropoda</taxon>
        <taxon>Hexapoda</taxon>
        <taxon>Insecta</taxon>
        <taxon>Pterygota</taxon>
        <taxon>Neoptera</taxon>
        <taxon>Endopterygota</taxon>
        <taxon>Diptera</taxon>
        <taxon>Brachycera</taxon>
        <taxon>Muscomorpha</taxon>
        <taxon>Ephydroidea</taxon>
        <taxon>Drosophilidae</taxon>
        <taxon>Drosophila</taxon>
        <taxon>Sophophora</taxon>
    </lineage>
</organism>
<keyword id="KW-1185">Reference proteome</keyword>
<keyword id="KW-0677">Repeat</keyword>
<reference evidence="3" key="1">
    <citation type="journal article" date="2007" name="Nature">
        <title>Evolution of genes and genomes on the Drosophila phylogeny.</title>
        <authorList>
            <consortium name="Drosophila 12 genomes consortium"/>
        </authorList>
    </citation>
    <scope>NUCLEOTIDE SEQUENCE [LARGE SCALE GENOMIC DNA]</scope>
</reference>
<protein>
    <recommendedName>
        <fullName>DM7 family protein GD24576</fullName>
    </recommendedName>
</protein>
<name>DM7A_DROSI</name>